<reference key="1">
    <citation type="submission" date="2006-04" db="EMBL/GenBank/DDBJ databases">
        <title>Complete sequence of chromosome of Deinococcus geothermalis DSM 11300.</title>
        <authorList>
            <person name="Copeland A."/>
            <person name="Lucas S."/>
            <person name="Lapidus A."/>
            <person name="Barry K."/>
            <person name="Detter J.C."/>
            <person name="Glavina del Rio T."/>
            <person name="Hammon N."/>
            <person name="Israni S."/>
            <person name="Dalin E."/>
            <person name="Tice H."/>
            <person name="Pitluck S."/>
            <person name="Brettin T."/>
            <person name="Bruce D."/>
            <person name="Han C."/>
            <person name="Tapia R."/>
            <person name="Saunders E."/>
            <person name="Gilna P."/>
            <person name="Schmutz J."/>
            <person name="Larimer F."/>
            <person name="Land M."/>
            <person name="Hauser L."/>
            <person name="Kyrpides N."/>
            <person name="Kim E."/>
            <person name="Daly M.J."/>
            <person name="Fredrickson J.K."/>
            <person name="Makarova K.S."/>
            <person name="Gaidamakova E.K."/>
            <person name="Zhai M."/>
            <person name="Richardson P."/>
        </authorList>
    </citation>
    <scope>NUCLEOTIDE SEQUENCE [LARGE SCALE GENOMIC DNA]</scope>
    <source>
        <strain>DSM 11300 / CIP 105573 / AG-3a</strain>
    </source>
</reference>
<feature type="chain" id="PRO_0000257185" description="UDP-N-acetylmuramoylalanine--D-glutamate ligase">
    <location>
        <begin position="1"/>
        <end position="466"/>
    </location>
</feature>
<feature type="binding site" evidence="1">
    <location>
        <begin position="139"/>
        <end position="145"/>
    </location>
    <ligand>
        <name>ATP</name>
        <dbReference type="ChEBI" id="CHEBI:30616"/>
    </ligand>
</feature>
<organism>
    <name type="scientific">Deinococcus geothermalis (strain DSM 11300 / CIP 105573 / AG-3a)</name>
    <dbReference type="NCBI Taxonomy" id="319795"/>
    <lineage>
        <taxon>Bacteria</taxon>
        <taxon>Thermotogati</taxon>
        <taxon>Deinococcota</taxon>
        <taxon>Deinococci</taxon>
        <taxon>Deinococcales</taxon>
        <taxon>Deinococcaceae</taxon>
        <taxon>Deinococcus</taxon>
    </lineage>
</organism>
<protein>
    <recommendedName>
        <fullName evidence="1">UDP-N-acetylmuramoylalanine--D-glutamate ligase</fullName>
        <ecNumber evidence="1">6.3.2.9</ecNumber>
    </recommendedName>
    <alternativeName>
        <fullName evidence="1">D-glutamic acid-adding enzyme</fullName>
    </alternativeName>
    <alternativeName>
        <fullName evidence="1">UDP-N-acetylmuramoyl-L-alanyl-D-glutamate synthetase</fullName>
    </alternativeName>
</protein>
<name>MURD_DEIGD</name>
<proteinExistence type="inferred from homology"/>
<accession>Q1J147</accession>
<gene>
    <name evidence="1" type="primary">murD</name>
    <name type="ordered locus">Dgeo_0485</name>
</gene>
<evidence type="ECO:0000255" key="1">
    <source>
        <dbReference type="HAMAP-Rule" id="MF_00639"/>
    </source>
</evidence>
<keyword id="KW-0067">ATP-binding</keyword>
<keyword id="KW-0131">Cell cycle</keyword>
<keyword id="KW-0132">Cell division</keyword>
<keyword id="KW-0133">Cell shape</keyword>
<keyword id="KW-0961">Cell wall biogenesis/degradation</keyword>
<keyword id="KW-0963">Cytoplasm</keyword>
<keyword id="KW-0436">Ligase</keyword>
<keyword id="KW-0547">Nucleotide-binding</keyword>
<keyword id="KW-0573">Peptidoglycan synthesis</keyword>
<comment type="function">
    <text evidence="1">Cell wall formation. Catalyzes the addition of glutamate to the nucleotide precursor UDP-N-acetylmuramoyl-L-alanine (UMA).</text>
</comment>
<comment type="catalytic activity">
    <reaction evidence="1">
        <text>UDP-N-acetyl-alpha-D-muramoyl-L-alanine + D-glutamate + ATP = UDP-N-acetyl-alpha-D-muramoyl-L-alanyl-D-glutamate + ADP + phosphate + H(+)</text>
        <dbReference type="Rhea" id="RHEA:16429"/>
        <dbReference type="ChEBI" id="CHEBI:15378"/>
        <dbReference type="ChEBI" id="CHEBI:29986"/>
        <dbReference type="ChEBI" id="CHEBI:30616"/>
        <dbReference type="ChEBI" id="CHEBI:43474"/>
        <dbReference type="ChEBI" id="CHEBI:83898"/>
        <dbReference type="ChEBI" id="CHEBI:83900"/>
        <dbReference type="ChEBI" id="CHEBI:456216"/>
        <dbReference type="EC" id="6.3.2.9"/>
    </reaction>
</comment>
<comment type="pathway">
    <text evidence="1">Cell wall biogenesis; peptidoglycan biosynthesis.</text>
</comment>
<comment type="subcellular location">
    <subcellularLocation>
        <location evidence="1">Cytoplasm</location>
    </subcellularLocation>
</comment>
<comment type="similarity">
    <text evidence="1">Belongs to the MurCDEF family.</text>
</comment>
<sequence>MLRRGGSASTLRRSRTSNLLLHSFPYRWDVTECAGAREKILIYGLGRSGRGVARFLAREGVRAEWHDAHPTAEDEALMQELGFLRGDPGGTYRTVVAAPGVPIDHADLLALSAGGAEIIGEVTLAARLRPHLPLVGVTGTAGKGGTTVLIAHLLRAQGLSALEGGNIDPPLLDVVDQAEVAVVELSSFQLERVPGLRLPVAVITNLGVDHLDRHRTVEAYHAAKLNITAGQEAEDVLVVPAGLEVRTRAQLRPFQPERLSLADGRELLPVADLPEGIHPANAAAAVLAAEALLTRLGRPVEPERLAAGLRSARPVAGRFETVARIGNVRFIEDSIATRTLAVEAALTRAVPPIAWLVGGRDKGADLVPLRAAAQGRVRRVIAFGEDGEKLARALGLPFETVPGTDGDTVMQAATRAGLEALGGPGGAGTVLLAPIGTSFDLFRDYKARGASFTRAARALVAGEVRA</sequence>
<dbReference type="EC" id="6.3.2.9" evidence="1"/>
<dbReference type="EMBL" id="CP000359">
    <property type="protein sequence ID" value="ABF44787.1"/>
    <property type="molecule type" value="Genomic_DNA"/>
</dbReference>
<dbReference type="SMR" id="Q1J147"/>
<dbReference type="STRING" id="319795.Dgeo_0485"/>
<dbReference type="KEGG" id="dge:Dgeo_0485"/>
<dbReference type="eggNOG" id="COG0771">
    <property type="taxonomic scope" value="Bacteria"/>
</dbReference>
<dbReference type="HOGENOM" id="CLU_032540_0_0_0"/>
<dbReference type="UniPathway" id="UPA00219"/>
<dbReference type="Proteomes" id="UP000002431">
    <property type="component" value="Chromosome"/>
</dbReference>
<dbReference type="GO" id="GO:0005737">
    <property type="term" value="C:cytoplasm"/>
    <property type="evidence" value="ECO:0007669"/>
    <property type="project" value="UniProtKB-SubCell"/>
</dbReference>
<dbReference type="GO" id="GO:0005524">
    <property type="term" value="F:ATP binding"/>
    <property type="evidence" value="ECO:0007669"/>
    <property type="project" value="UniProtKB-UniRule"/>
</dbReference>
<dbReference type="GO" id="GO:0008764">
    <property type="term" value="F:UDP-N-acetylmuramoylalanine-D-glutamate ligase activity"/>
    <property type="evidence" value="ECO:0007669"/>
    <property type="project" value="UniProtKB-UniRule"/>
</dbReference>
<dbReference type="GO" id="GO:0051301">
    <property type="term" value="P:cell division"/>
    <property type="evidence" value="ECO:0007669"/>
    <property type="project" value="UniProtKB-KW"/>
</dbReference>
<dbReference type="GO" id="GO:0071555">
    <property type="term" value="P:cell wall organization"/>
    <property type="evidence" value="ECO:0007669"/>
    <property type="project" value="UniProtKB-KW"/>
</dbReference>
<dbReference type="GO" id="GO:0009252">
    <property type="term" value="P:peptidoglycan biosynthetic process"/>
    <property type="evidence" value="ECO:0007669"/>
    <property type="project" value="UniProtKB-UniRule"/>
</dbReference>
<dbReference type="GO" id="GO:0008360">
    <property type="term" value="P:regulation of cell shape"/>
    <property type="evidence" value="ECO:0007669"/>
    <property type="project" value="UniProtKB-KW"/>
</dbReference>
<dbReference type="Gene3D" id="3.90.190.20">
    <property type="entry name" value="Mur ligase, C-terminal domain"/>
    <property type="match status" value="1"/>
</dbReference>
<dbReference type="Gene3D" id="3.40.1190.10">
    <property type="entry name" value="Mur-like, catalytic domain"/>
    <property type="match status" value="1"/>
</dbReference>
<dbReference type="Gene3D" id="3.40.50.720">
    <property type="entry name" value="NAD(P)-binding Rossmann-like Domain"/>
    <property type="match status" value="1"/>
</dbReference>
<dbReference type="HAMAP" id="MF_00639">
    <property type="entry name" value="MurD"/>
    <property type="match status" value="1"/>
</dbReference>
<dbReference type="InterPro" id="IPR036565">
    <property type="entry name" value="Mur-like_cat_sf"/>
</dbReference>
<dbReference type="InterPro" id="IPR036615">
    <property type="entry name" value="Mur_ligase_C_dom_sf"/>
</dbReference>
<dbReference type="InterPro" id="IPR013221">
    <property type="entry name" value="Mur_ligase_cen"/>
</dbReference>
<dbReference type="InterPro" id="IPR005762">
    <property type="entry name" value="MurD"/>
</dbReference>
<dbReference type="NCBIfam" id="TIGR01087">
    <property type="entry name" value="murD"/>
    <property type="match status" value="1"/>
</dbReference>
<dbReference type="PANTHER" id="PTHR43692">
    <property type="entry name" value="UDP-N-ACETYLMURAMOYLALANINE--D-GLUTAMATE LIGASE"/>
    <property type="match status" value="1"/>
</dbReference>
<dbReference type="PANTHER" id="PTHR43692:SF1">
    <property type="entry name" value="UDP-N-ACETYLMURAMOYLALANINE--D-GLUTAMATE LIGASE"/>
    <property type="match status" value="1"/>
</dbReference>
<dbReference type="Pfam" id="PF08245">
    <property type="entry name" value="Mur_ligase_M"/>
    <property type="match status" value="1"/>
</dbReference>
<dbReference type="SUPFAM" id="SSF51984">
    <property type="entry name" value="MurCD N-terminal domain"/>
    <property type="match status" value="1"/>
</dbReference>
<dbReference type="SUPFAM" id="SSF53623">
    <property type="entry name" value="MurD-like peptide ligases, catalytic domain"/>
    <property type="match status" value="1"/>
</dbReference>
<dbReference type="SUPFAM" id="SSF53244">
    <property type="entry name" value="MurD-like peptide ligases, peptide-binding domain"/>
    <property type="match status" value="1"/>
</dbReference>